<protein>
    <recommendedName>
        <fullName>Leucine-rich repeat and fibronectin type-III domain-containing protein 4</fullName>
    </recommendedName>
</protein>
<name>LRFN4_MOUSE</name>
<reference key="1">
    <citation type="journal article" date="2006" name="J. Neurosci.">
        <title>A novel family of adhesion-like molecules that interacts with the NMDA receptor.</title>
        <authorList>
            <person name="Wang C.Y."/>
            <person name="Chang K."/>
            <person name="Petralia R.S."/>
            <person name="Wang Y.X."/>
            <person name="Seabold G.K."/>
            <person name="Wenthold R.J."/>
        </authorList>
    </citation>
    <scope>NUCLEOTIDE SEQUENCE [MRNA]</scope>
    <source>
        <strain>BALB/cJ</strain>
    </source>
</reference>
<reference key="2">
    <citation type="journal article" date="2005" name="Science">
        <title>The transcriptional landscape of the mammalian genome.</title>
        <authorList>
            <person name="Carninci P."/>
            <person name="Kasukawa T."/>
            <person name="Katayama S."/>
            <person name="Gough J."/>
            <person name="Frith M.C."/>
            <person name="Maeda N."/>
            <person name="Oyama R."/>
            <person name="Ravasi T."/>
            <person name="Lenhard B."/>
            <person name="Wells C."/>
            <person name="Kodzius R."/>
            <person name="Shimokawa K."/>
            <person name="Bajic V.B."/>
            <person name="Brenner S.E."/>
            <person name="Batalov S."/>
            <person name="Forrest A.R."/>
            <person name="Zavolan M."/>
            <person name="Davis M.J."/>
            <person name="Wilming L.G."/>
            <person name="Aidinis V."/>
            <person name="Allen J.E."/>
            <person name="Ambesi-Impiombato A."/>
            <person name="Apweiler R."/>
            <person name="Aturaliya R.N."/>
            <person name="Bailey T.L."/>
            <person name="Bansal M."/>
            <person name="Baxter L."/>
            <person name="Beisel K.W."/>
            <person name="Bersano T."/>
            <person name="Bono H."/>
            <person name="Chalk A.M."/>
            <person name="Chiu K.P."/>
            <person name="Choudhary V."/>
            <person name="Christoffels A."/>
            <person name="Clutterbuck D.R."/>
            <person name="Crowe M.L."/>
            <person name="Dalla E."/>
            <person name="Dalrymple B.P."/>
            <person name="de Bono B."/>
            <person name="Della Gatta G."/>
            <person name="di Bernardo D."/>
            <person name="Down T."/>
            <person name="Engstrom P."/>
            <person name="Fagiolini M."/>
            <person name="Faulkner G."/>
            <person name="Fletcher C.F."/>
            <person name="Fukushima T."/>
            <person name="Furuno M."/>
            <person name="Futaki S."/>
            <person name="Gariboldi M."/>
            <person name="Georgii-Hemming P."/>
            <person name="Gingeras T.R."/>
            <person name="Gojobori T."/>
            <person name="Green R.E."/>
            <person name="Gustincich S."/>
            <person name="Harbers M."/>
            <person name="Hayashi Y."/>
            <person name="Hensch T.K."/>
            <person name="Hirokawa N."/>
            <person name="Hill D."/>
            <person name="Huminiecki L."/>
            <person name="Iacono M."/>
            <person name="Ikeo K."/>
            <person name="Iwama A."/>
            <person name="Ishikawa T."/>
            <person name="Jakt M."/>
            <person name="Kanapin A."/>
            <person name="Katoh M."/>
            <person name="Kawasawa Y."/>
            <person name="Kelso J."/>
            <person name="Kitamura H."/>
            <person name="Kitano H."/>
            <person name="Kollias G."/>
            <person name="Krishnan S.P."/>
            <person name="Kruger A."/>
            <person name="Kummerfeld S.K."/>
            <person name="Kurochkin I.V."/>
            <person name="Lareau L.F."/>
            <person name="Lazarevic D."/>
            <person name="Lipovich L."/>
            <person name="Liu J."/>
            <person name="Liuni S."/>
            <person name="McWilliam S."/>
            <person name="Madan Babu M."/>
            <person name="Madera M."/>
            <person name="Marchionni L."/>
            <person name="Matsuda H."/>
            <person name="Matsuzawa S."/>
            <person name="Miki H."/>
            <person name="Mignone F."/>
            <person name="Miyake S."/>
            <person name="Morris K."/>
            <person name="Mottagui-Tabar S."/>
            <person name="Mulder N."/>
            <person name="Nakano N."/>
            <person name="Nakauchi H."/>
            <person name="Ng P."/>
            <person name="Nilsson R."/>
            <person name="Nishiguchi S."/>
            <person name="Nishikawa S."/>
            <person name="Nori F."/>
            <person name="Ohara O."/>
            <person name="Okazaki Y."/>
            <person name="Orlando V."/>
            <person name="Pang K.C."/>
            <person name="Pavan W.J."/>
            <person name="Pavesi G."/>
            <person name="Pesole G."/>
            <person name="Petrovsky N."/>
            <person name="Piazza S."/>
            <person name="Reed J."/>
            <person name="Reid J.F."/>
            <person name="Ring B.Z."/>
            <person name="Ringwald M."/>
            <person name="Rost B."/>
            <person name="Ruan Y."/>
            <person name="Salzberg S.L."/>
            <person name="Sandelin A."/>
            <person name="Schneider C."/>
            <person name="Schoenbach C."/>
            <person name="Sekiguchi K."/>
            <person name="Semple C.A."/>
            <person name="Seno S."/>
            <person name="Sessa L."/>
            <person name="Sheng Y."/>
            <person name="Shibata Y."/>
            <person name="Shimada H."/>
            <person name="Shimada K."/>
            <person name="Silva D."/>
            <person name="Sinclair B."/>
            <person name="Sperling S."/>
            <person name="Stupka E."/>
            <person name="Sugiura K."/>
            <person name="Sultana R."/>
            <person name="Takenaka Y."/>
            <person name="Taki K."/>
            <person name="Tammoja K."/>
            <person name="Tan S.L."/>
            <person name="Tang S."/>
            <person name="Taylor M.S."/>
            <person name="Tegner J."/>
            <person name="Teichmann S.A."/>
            <person name="Ueda H.R."/>
            <person name="van Nimwegen E."/>
            <person name="Verardo R."/>
            <person name="Wei C.L."/>
            <person name="Yagi K."/>
            <person name="Yamanishi H."/>
            <person name="Zabarovsky E."/>
            <person name="Zhu S."/>
            <person name="Zimmer A."/>
            <person name="Hide W."/>
            <person name="Bult C."/>
            <person name="Grimmond S.M."/>
            <person name="Teasdale R.D."/>
            <person name="Liu E.T."/>
            <person name="Brusic V."/>
            <person name="Quackenbush J."/>
            <person name="Wahlestedt C."/>
            <person name="Mattick J.S."/>
            <person name="Hume D.A."/>
            <person name="Kai C."/>
            <person name="Sasaki D."/>
            <person name="Tomaru Y."/>
            <person name="Fukuda S."/>
            <person name="Kanamori-Katayama M."/>
            <person name="Suzuki M."/>
            <person name="Aoki J."/>
            <person name="Arakawa T."/>
            <person name="Iida J."/>
            <person name="Imamura K."/>
            <person name="Itoh M."/>
            <person name="Kato T."/>
            <person name="Kawaji H."/>
            <person name="Kawagashira N."/>
            <person name="Kawashima T."/>
            <person name="Kojima M."/>
            <person name="Kondo S."/>
            <person name="Konno H."/>
            <person name="Nakano K."/>
            <person name="Ninomiya N."/>
            <person name="Nishio T."/>
            <person name="Okada M."/>
            <person name="Plessy C."/>
            <person name="Shibata K."/>
            <person name="Shiraki T."/>
            <person name="Suzuki S."/>
            <person name="Tagami M."/>
            <person name="Waki K."/>
            <person name="Watahiki A."/>
            <person name="Okamura-Oho Y."/>
            <person name="Suzuki H."/>
            <person name="Kawai J."/>
            <person name="Hayashizaki Y."/>
        </authorList>
    </citation>
    <scope>NUCLEOTIDE SEQUENCE [LARGE SCALE MRNA]</scope>
    <source>
        <strain>C57BL/6J</strain>
        <tissue>Adipose tissue</tissue>
        <tissue>Head</tissue>
    </source>
</reference>
<reference key="3">
    <citation type="journal article" date="2004" name="Genome Res.">
        <title>The status, quality, and expansion of the NIH full-length cDNA project: the Mammalian Gene Collection (MGC).</title>
        <authorList>
            <consortium name="The MGC Project Team"/>
        </authorList>
    </citation>
    <scope>NUCLEOTIDE SEQUENCE [LARGE SCALE MRNA]</scope>
    <source>
        <strain>FVB/N</strain>
        <tissue>Eye</tissue>
        <tissue>Mammary tumor</tissue>
    </source>
</reference>
<reference key="4">
    <citation type="journal article" date="2006" name="Gene">
        <title>Comparative analysis of structure, expression and PSD95-binding capacity of Lrfn, a novel family of neuronal transmembrane proteins.</title>
        <authorList>
            <person name="Morimura N."/>
            <person name="Inoue T."/>
            <person name="Katayama K."/>
            <person name="Aruga J."/>
        </authorList>
    </citation>
    <scope>FUNCTION</scope>
    <scope>INTERACTION WITH DLG4</scope>
    <scope>DEVELOPMENTAL STAGE</scope>
    <scope>TISSUE SPECIFICITY</scope>
    <scope>GLYCOSYLATION</scope>
    <scope>SUBCELLULAR LOCATION</scope>
    <scope>TOPOLOGY</scope>
</reference>
<reference key="5">
    <citation type="journal article" date="2008" name="J. Biol. Chem.">
        <title>The SALM family of adhesion-like molecules forms heteromeric and homomeric complexes.</title>
        <authorList>
            <person name="Seabold G.K."/>
            <person name="Wang P.Y."/>
            <person name="Chang K."/>
            <person name="Wang C.Y."/>
            <person name="Wang Y.X."/>
            <person name="Petralia R.S."/>
            <person name="Wenthold R.J."/>
        </authorList>
    </citation>
    <scope>INTERACTION WITH LRFN1; LRFN2; LRFN3 AND LRFN5</scope>
    <scope>SUBCELLULAR LOCATION</scope>
    <scope>TOPOLOGY</scope>
</reference>
<reference key="6">
    <citation type="journal article" date="2008" name="Mol. Cell. Neurosci.">
        <title>Synaptic adhesion-like molecules (SALMs) promote neurite outgrowth.</title>
        <authorList>
            <person name="Wang P.Y."/>
            <person name="Seabold G.K."/>
            <person name="Wenthold R.J."/>
        </authorList>
    </citation>
    <scope>FUNCTION</scope>
</reference>
<reference key="7">
    <citation type="journal article" date="2010" name="Cell">
        <title>A tissue-specific atlas of mouse protein phosphorylation and expression.</title>
        <authorList>
            <person name="Huttlin E.L."/>
            <person name="Jedrychowski M.P."/>
            <person name="Elias J.E."/>
            <person name="Goswami T."/>
            <person name="Rad R."/>
            <person name="Beausoleil S.A."/>
            <person name="Villen J."/>
            <person name="Haas W."/>
            <person name="Sowa M.E."/>
            <person name="Gygi S.P."/>
        </authorList>
    </citation>
    <scope>IDENTIFICATION BY MASS SPECTROMETRY [LARGE SCALE ANALYSIS]</scope>
    <source>
        <tissue>Brain</tissue>
    </source>
</reference>
<accession>Q80XU8</accession>
<accession>Q3TQG8</accession>
<accession>Q460G5</accession>
<accession>Q8K3C4</accession>
<gene>
    <name type="primary">Lrfn4</name>
    <name type="synonym">Salm3</name>
</gene>
<feature type="signal peptide" evidence="3">
    <location>
        <begin position="1"/>
        <end position="16"/>
    </location>
</feature>
<feature type="chain" id="PRO_0000014844" description="Leucine-rich repeat and fibronectin type-III domain-containing protein 4">
    <location>
        <begin position="17"/>
        <end position="636"/>
    </location>
</feature>
<feature type="topological domain" description="Extracellular" evidence="3">
    <location>
        <begin position="17"/>
        <end position="518"/>
    </location>
</feature>
<feature type="transmembrane region" description="Helical" evidence="3">
    <location>
        <begin position="519"/>
        <end position="539"/>
    </location>
</feature>
<feature type="topological domain" description="Cytoplasmic" evidence="3">
    <location>
        <begin position="540"/>
        <end position="636"/>
    </location>
</feature>
<feature type="domain" description="LRRNT">
    <location>
        <begin position="17"/>
        <end position="48"/>
    </location>
</feature>
<feature type="repeat" description="LRR 1">
    <location>
        <begin position="49"/>
        <end position="70"/>
    </location>
</feature>
<feature type="repeat" description="LRR 2">
    <location>
        <begin position="73"/>
        <end position="94"/>
    </location>
</feature>
<feature type="repeat" description="LRR 3">
    <location>
        <begin position="97"/>
        <end position="118"/>
    </location>
</feature>
<feature type="repeat" description="LRR 4">
    <location>
        <begin position="121"/>
        <end position="142"/>
    </location>
</feature>
<feature type="repeat" description="LRR 5">
    <location>
        <begin position="146"/>
        <end position="169"/>
    </location>
</feature>
<feature type="repeat" description="LRR 6">
    <location>
        <begin position="170"/>
        <end position="191"/>
    </location>
</feature>
<feature type="repeat" description="LRR 7">
    <location>
        <begin position="194"/>
        <end position="215"/>
    </location>
</feature>
<feature type="domain" description="LRRCT">
    <location>
        <begin position="234"/>
        <end position="280"/>
    </location>
</feature>
<feature type="domain" description="Ig-like">
    <location>
        <begin position="281"/>
        <end position="367"/>
    </location>
</feature>
<feature type="domain" description="Fibronectin type-III" evidence="5">
    <location>
        <begin position="405"/>
        <end position="502"/>
    </location>
</feature>
<feature type="region of interest" description="Disordered" evidence="6">
    <location>
        <begin position="556"/>
        <end position="585"/>
    </location>
</feature>
<feature type="short sequence motif" description="PDZ-binding">
    <location>
        <begin position="633"/>
        <end position="636"/>
    </location>
</feature>
<feature type="compositionally biased region" description="Pro residues" evidence="6">
    <location>
        <begin position="569"/>
        <end position="580"/>
    </location>
</feature>
<feature type="modified residue" description="Phosphoserine" evidence="2">
    <location>
        <position position="585"/>
    </location>
</feature>
<feature type="modified residue" description="Phosphoserine" evidence="2">
    <location>
        <position position="627"/>
    </location>
</feature>
<feature type="glycosylation site" description="N-linked (GlcNAc...) asparagine" evidence="3">
    <location>
        <position position="25"/>
    </location>
</feature>
<feature type="glycosylation site" description="N-linked (GlcNAc...) asparagine" evidence="3">
    <location>
        <position position="70"/>
    </location>
</feature>
<feature type="glycosylation site" description="N-linked (GlcNAc...) asparagine" evidence="3">
    <location>
        <position position="324"/>
    </location>
</feature>
<feature type="glycosylation site" description="N-linked (GlcNAc...) asparagine" evidence="3">
    <location>
        <position position="333"/>
    </location>
</feature>
<feature type="glycosylation site" description="N-linked (GlcNAc...) asparagine" evidence="3">
    <location>
        <position position="376"/>
    </location>
</feature>
<feature type="glycosylation site" description="N-linked (GlcNAc...) asparagine" evidence="3">
    <location>
        <position position="440"/>
    </location>
</feature>
<feature type="disulfide bond" evidence="4">
    <location>
        <begin position="302"/>
        <end position="351"/>
    </location>
</feature>
<feature type="sequence conflict" description="In Ref. 1; AAZ23615 and 3; AAH23156." evidence="10" ref="1 3">
    <original>T</original>
    <variation>N</variation>
    <location>
        <position position="503"/>
    </location>
</feature>
<feature type="strand" evidence="11">
    <location>
        <begin position="22"/>
        <end position="26"/>
    </location>
</feature>
<feature type="strand" evidence="11">
    <location>
        <begin position="29"/>
        <end position="33"/>
    </location>
</feature>
<feature type="strand" evidence="11">
    <location>
        <begin position="50"/>
        <end position="54"/>
    </location>
</feature>
<feature type="helix" evidence="11">
    <location>
        <begin position="65"/>
        <end position="67"/>
    </location>
</feature>
<feature type="strand" evidence="11">
    <location>
        <begin position="76"/>
        <end position="78"/>
    </location>
</feature>
<feature type="turn" evidence="11">
    <location>
        <begin position="89"/>
        <end position="94"/>
    </location>
</feature>
<feature type="strand" evidence="11">
    <location>
        <begin position="100"/>
        <end position="102"/>
    </location>
</feature>
<feature type="turn" evidence="11">
    <location>
        <begin position="113"/>
        <end position="116"/>
    </location>
</feature>
<feature type="strand" evidence="11">
    <location>
        <begin position="124"/>
        <end position="126"/>
    </location>
</feature>
<feature type="helix" evidence="11">
    <location>
        <begin position="141"/>
        <end position="143"/>
    </location>
</feature>
<feature type="turn" evidence="11">
    <location>
        <begin position="144"/>
        <end position="146"/>
    </location>
</feature>
<feature type="strand" evidence="11">
    <location>
        <begin position="149"/>
        <end position="151"/>
    </location>
</feature>
<feature type="helix" evidence="11">
    <location>
        <begin position="162"/>
        <end position="165"/>
    </location>
</feature>
<feature type="strand" evidence="11">
    <location>
        <begin position="173"/>
        <end position="175"/>
    </location>
</feature>
<feature type="strand" evidence="11">
    <location>
        <begin position="197"/>
        <end position="199"/>
    </location>
</feature>
<feature type="helix" evidence="11">
    <location>
        <begin position="240"/>
        <end position="242"/>
    </location>
</feature>
<feature type="helix" evidence="11">
    <location>
        <begin position="243"/>
        <end position="246"/>
    </location>
</feature>
<feature type="strand" evidence="11">
    <location>
        <begin position="256"/>
        <end position="260"/>
    </location>
</feature>
<feature type="turn" evidence="11">
    <location>
        <begin position="261"/>
        <end position="265"/>
    </location>
</feature>
<feature type="turn" evidence="11">
    <location>
        <begin position="268"/>
        <end position="270"/>
    </location>
</feature>
<feature type="helix" evidence="11">
    <location>
        <begin position="273"/>
        <end position="275"/>
    </location>
</feature>
<evidence type="ECO:0000250" key="1"/>
<evidence type="ECO:0000250" key="2">
    <source>
        <dbReference type="UniProtKB" id="Q6PJG9"/>
    </source>
</evidence>
<evidence type="ECO:0000255" key="3"/>
<evidence type="ECO:0000255" key="4">
    <source>
        <dbReference type="PROSITE-ProRule" id="PRU00114"/>
    </source>
</evidence>
<evidence type="ECO:0000255" key="5">
    <source>
        <dbReference type="PROSITE-ProRule" id="PRU00316"/>
    </source>
</evidence>
<evidence type="ECO:0000256" key="6">
    <source>
        <dbReference type="SAM" id="MobiDB-lite"/>
    </source>
</evidence>
<evidence type="ECO:0000269" key="7">
    <source>
    </source>
</evidence>
<evidence type="ECO:0000269" key="8">
    <source>
    </source>
</evidence>
<evidence type="ECO:0000269" key="9">
    <source>
    </source>
</evidence>
<evidence type="ECO:0000305" key="10"/>
<evidence type="ECO:0007829" key="11">
    <source>
        <dbReference type="PDB" id="6TL8"/>
    </source>
</evidence>
<keyword id="KW-0002">3D-structure</keyword>
<keyword id="KW-1015">Disulfide bond</keyword>
<keyword id="KW-0325">Glycoprotein</keyword>
<keyword id="KW-0393">Immunoglobulin domain</keyword>
<keyword id="KW-0433">Leucine-rich repeat</keyword>
<keyword id="KW-0472">Membrane</keyword>
<keyword id="KW-0597">Phosphoprotein</keyword>
<keyword id="KW-1185">Reference proteome</keyword>
<keyword id="KW-0677">Repeat</keyword>
<keyword id="KW-0732">Signal</keyword>
<keyword id="KW-0812">Transmembrane</keyword>
<keyword id="KW-1133">Transmembrane helix</keyword>
<proteinExistence type="evidence at protein level"/>
<organism>
    <name type="scientific">Mus musculus</name>
    <name type="common">Mouse</name>
    <dbReference type="NCBI Taxonomy" id="10090"/>
    <lineage>
        <taxon>Eukaryota</taxon>
        <taxon>Metazoa</taxon>
        <taxon>Chordata</taxon>
        <taxon>Craniata</taxon>
        <taxon>Vertebrata</taxon>
        <taxon>Euteleostomi</taxon>
        <taxon>Mammalia</taxon>
        <taxon>Eutheria</taxon>
        <taxon>Euarchontoglires</taxon>
        <taxon>Glires</taxon>
        <taxon>Rodentia</taxon>
        <taxon>Myomorpha</taxon>
        <taxon>Muroidea</taxon>
        <taxon>Muridae</taxon>
        <taxon>Murinae</taxon>
        <taxon>Mus</taxon>
        <taxon>Mus</taxon>
    </lineage>
</organism>
<comment type="function">
    <text evidence="7 9">Promotes neurite outgrowth in hippocampal neurons. May play a role in redistributing DLG4 to the cell periphery.</text>
</comment>
<comment type="subunit">
    <text evidence="1 7 8">Can form heteromeric complexes with LRFN1, LRFN2, LRFN3 and LRFN5. Unable to form homophilic interactions across cell junctions. Interacts with DLG1, DLG2 and DLG3 (By similarity). Also interacts with DLG4.</text>
</comment>
<comment type="subcellular location">
    <subcellularLocation>
        <location evidence="7 8">Membrane</location>
        <topology evidence="7 8">Single-pass type I membrane protein</topology>
    </subcellularLocation>
</comment>
<comment type="tissue specificity">
    <text evidence="7">Expressed in brain and testis. In the brain, weak, but broad expression in the cerebral cortex and diencephalic nuclei. Also detected in other parts of the central nervous system, including the olfactory bulb, pons, cerebellum, and medulla oblongata, as well as in the peripheral nervous system, such as the ganglia of cranial nerves and the dorsal root ganglion during gestation.</text>
</comment>
<comment type="developmental stage">
    <text evidence="7">Low expression from 4.5 dpc onwards. Expression increases at 10.5 dpc and decreases after 15.5 dpc. At 11.5 dpc, broadly expressed in the telencephalic and diencephalic vesicles. This pattern of expression continues until 17.5 dpc.</text>
</comment>
<comment type="domain">
    <text evidence="1">The PDZ-binding motif is required for neurite outgrowth promotion. This motif is also involved in DLG1-, DLG3- and DLG4-binding (By similarity).</text>
</comment>
<comment type="PTM">
    <text evidence="7">Glycosylated.</text>
</comment>
<comment type="similarity">
    <text evidence="10">Belongs to the LRFN family.</text>
</comment>
<dbReference type="EMBL" id="DQ078786">
    <property type="protein sequence ID" value="AAZ23615.1"/>
    <property type="molecule type" value="mRNA"/>
</dbReference>
<dbReference type="EMBL" id="AK081560">
    <property type="protein sequence ID" value="BAC38259.1"/>
    <property type="molecule type" value="mRNA"/>
</dbReference>
<dbReference type="EMBL" id="AK163603">
    <property type="protein sequence ID" value="BAE37415.1"/>
    <property type="molecule type" value="mRNA"/>
</dbReference>
<dbReference type="EMBL" id="BC023036">
    <property type="protein sequence ID" value="AAH23036.1"/>
    <property type="molecule type" value="mRNA"/>
</dbReference>
<dbReference type="EMBL" id="BC023156">
    <property type="protein sequence ID" value="AAH23156.1"/>
    <property type="molecule type" value="mRNA"/>
</dbReference>
<dbReference type="CCDS" id="CCDS29431.1"/>
<dbReference type="RefSeq" id="NP_001412988.1">
    <property type="nucleotide sequence ID" value="NM_001426059.1"/>
</dbReference>
<dbReference type="RefSeq" id="NP_700437.2">
    <property type="nucleotide sequence ID" value="NM_153388.4"/>
</dbReference>
<dbReference type="RefSeq" id="XP_017173631.1">
    <property type="nucleotide sequence ID" value="XM_017318142.1"/>
</dbReference>
<dbReference type="PDB" id="6TL8">
    <property type="method" value="X-ray"/>
    <property type="resolution" value="2.80 A"/>
    <property type="chains" value="A/B/C/D=17-284"/>
</dbReference>
<dbReference type="PDBsum" id="6TL8"/>
<dbReference type="SASBDB" id="Q80XU8"/>
<dbReference type="SMR" id="Q80XU8"/>
<dbReference type="BioGRID" id="230437">
    <property type="interactions" value="1"/>
</dbReference>
<dbReference type="FunCoup" id="Q80XU8">
    <property type="interactions" value="157"/>
</dbReference>
<dbReference type="STRING" id="10090.ENSMUSP00000050039"/>
<dbReference type="GlyCosmos" id="Q80XU8">
    <property type="glycosylation" value="6 sites, No reported glycans"/>
</dbReference>
<dbReference type="GlyGen" id="Q80XU8">
    <property type="glycosylation" value="6 sites, 4 N-linked glycans (4 sites)"/>
</dbReference>
<dbReference type="iPTMnet" id="Q80XU8"/>
<dbReference type="PhosphoSitePlus" id="Q80XU8"/>
<dbReference type="PaxDb" id="10090-ENSMUSP00000109453"/>
<dbReference type="PeptideAtlas" id="Q80XU8"/>
<dbReference type="ProteomicsDB" id="290166"/>
<dbReference type="Antibodypedia" id="30278">
    <property type="antibodies" value="51 antibodies from 22 providers"/>
</dbReference>
<dbReference type="DNASU" id="225875"/>
<dbReference type="Ensembl" id="ENSMUST00000053597.3">
    <property type="protein sequence ID" value="ENSMUSP00000050039.3"/>
    <property type="gene ID" value="ENSMUSG00000045045.8"/>
</dbReference>
<dbReference type="Ensembl" id="ENSMUST00000113822.3">
    <property type="protein sequence ID" value="ENSMUSP00000109453.3"/>
    <property type="gene ID" value="ENSMUSG00000045045.8"/>
</dbReference>
<dbReference type="GeneID" id="225875"/>
<dbReference type="KEGG" id="mmu:225875"/>
<dbReference type="UCSC" id="uc008gah.2">
    <property type="organism name" value="mouse"/>
</dbReference>
<dbReference type="AGR" id="MGI:2385612"/>
<dbReference type="CTD" id="78999"/>
<dbReference type="MGI" id="MGI:2385612">
    <property type="gene designation" value="Lrfn4"/>
</dbReference>
<dbReference type="VEuPathDB" id="HostDB:ENSMUSG00000045045"/>
<dbReference type="eggNOG" id="KOG0619">
    <property type="taxonomic scope" value="Eukaryota"/>
</dbReference>
<dbReference type="eggNOG" id="KOG4237">
    <property type="taxonomic scope" value="Eukaryota"/>
</dbReference>
<dbReference type="GeneTree" id="ENSGT00940000162195"/>
<dbReference type="HOGENOM" id="CLU_016998_1_0_1"/>
<dbReference type="InParanoid" id="Q80XU8"/>
<dbReference type="OMA" id="NCTVDDT"/>
<dbReference type="OrthoDB" id="676979at2759"/>
<dbReference type="PhylomeDB" id="Q80XU8"/>
<dbReference type="TreeFam" id="TF350185"/>
<dbReference type="Reactome" id="R-MMU-8849932">
    <property type="pathway name" value="Synaptic adhesion-like molecules"/>
</dbReference>
<dbReference type="BioGRID-ORCS" id="225875">
    <property type="hits" value="3 hits in 79 CRISPR screens"/>
</dbReference>
<dbReference type="PRO" id="PR:Q80XU8"/>
<dbReference type="Proteomes" id="UP000000589">
    <property type="component" value="Chromosome 19"/>
</dbReference>
<dbReference type="RNAct" id="Q80XU8">
    <property type="molecule type" value="protein"/>
</dbReference>
<dbReference type="Bgee" id="ENSMUSG00000045045">
    <property type="expression patterns" value="Expressed in embryonic brain and 169 other cell types or tissues"/>
</dbReference>
<dbReference type="GO" id="GO:0009986">
    <property type="term" value="C:cell surface"/>
    <property type="evidence" value="ECO:0000314"/>
    <property type="project" value="MGI"/>
</dbReference>
<dbReference type="GO" id="GO:0098982">
    <property type="term" value="C:GABA-ergic synapse"/>
    <property type="evidence" value="ECO:0000314"/>
    <property type="project" value="SynGO"/>
</dbReference>
<dbReference type="GO" id="GO:0098978">
    <property type="term" value="C:glutamatergic synapse"/>
    <property type="evidence" value="ECO:0000314"/>
    <property type="project" value="SynGO"/>
</dbReference>
<dbReference type="GO" id="GO:0098839">
    <property type="term" value="C:postsynaptic density membrane"/>
    <property type="evidence" value="ECO:0007669"/>
    <property type="project" value="Ensembl"/>
</dbReference>
<dbReference type="GO" id="GO:0099151">
    <property type="term" value="P:regulation of postsynaptic density assembly"/>
    <property type="evidence" value="ECO:0000314"/>
    <property type="project" value="SynGO"/>
</dbReference>
<dbReference type="GO" id="GO:1905606">
    <property type="term" value="P:regulation of presynapse assembly"/>
    <property type="evidence" value="ECO:0000314"/>
    <property type="project" value="SynGO"/>
</dbReference>
<dbReference type="GO" id="GO:0099560">
    <property type="term" value="P:synaptic membrane adhesion"/>
    <property type="evidence" value="ECO:0000314"/>
    <property type="project" value="SynGO"/>
</dbReference>
<dbReference type="FunFam" id="3.80.10.10:FF:000025">
    <property type="entry name" value="Leucine rich repeat and fibronectin type III domain containing 5"/>
    <property type="match status" value="1"/>
</dbReference>
<dbReference type="FunFam" id="3.80.10.10:FF:000045">
    <property type="entry name" value="Leucine-rich repeat and fibronectin type III domain-containing 2"/>
    <property type="match status" value="1"/>
</dbReference>
<dbReference type="FunFam" id="2.60.40.10:FF:000091">
    <property type="entry name" value="Leucine-rich repeat and fibronectin type III domain-containing protein 1"/>
    <property type="match status" value="1"/>
</dbReference>
<dbReference type="FunFam" id="2.60.40.10:FF:001081">
    <property type="entry name" value="Leucine-rich repeat and fibronectin type-III domain-containing protein 4"/>
    <property type="match status" value="1"/>
</dbReference>
<dbReference type="Gene3D" id="2.60.40.10">
    <property type="entry name" value="Immunoglobulins"/>
    <property type="match status" value="2"/>
</dbReference>
<dbReference type="Gene3D" id="3.80.10.10">
    <property type="entry name" value="Ribonuclease Inhibitor"/>
    <property type="match status" value="2"/>
</dbReference>
<dbReference type="InterPro" id="IPR000483">
    <property type="entry name" value="Cys-rich_flank_reg_C"/>
</dbReference>
<dbReference type="InterPro" id="IPR003961">
    <property type="entry name" value="FN3_dom"/>
</dbReference>
<dbReference type="InterPro" id="IPR036116">
    <property type="entry name" value="FN3_sf"/>
</dbReference>
<dbReference type="InterPro" id="IPR007110">
    <property type="entry name" value="Ig-like_dom"/>
</dbReference>
<dbReference type="InterPro" id="IPR036179">
    <property type="entry name" value="Ig-like_dom_sf"/>
</dbReference>
<dbReference type="InterPro" id="IPR013783">
    <property type="entry name" value="Ig-like_fold"/>
</dbReference>
<dbReference type="InterPro" id="IPR013098">
    <property type="entry name" value="Ig_I-set"/>
</dbReference>
<dbReference type="InterPro" id="IPR003599">
    <property type="entry name" value="Ig_sub"/>
</dbReference>
<dbReference type="InterPro" id="IPR003598">
    <property type="entry name" value="Ig_sub2"/>
</dbReference>
<dbReference type="InterPro" id="IPR001611">
    <property type="entry name" value="Leu-rich_rpt"/>
</dbReference>
<dbReference type="InterPro" id="IPR003591">
    <property type="entry name" value="Leu-rich_rpt_typical-subtyp"/>
</dbReference>
<dbReference type="InterPro" id="IPR050467">
    <property type="entry name" value="LRFN"/>
</dbReference>
<dbReference type="InterPro" id="IPR032675">
    <property type="entry name" value="LRR_dom_sf"/>
</dbReference>
<dbReference type="PANTHER" id="PTHR45842:SF3">
    <property type="entry name" value="LEUCINE-RICH REPEAT AND FIBRONECTIN TYPE-III DOMAIN-CONTAINING PROTEIN 4"/>
    <property type="match status" value="1"/>
</dbReference>
<dbReference type="PANTHER" id="PTHR45842">
    <property type="entry name" value="SYNAPTIC ADHESION-LIKE MOLECULE SALM"/>
    <property type="match status" value="1"/>
</dbReference>
<dbReference type="Pfam" id="PF00041">
    <property type="entry name" value="fn3"/>
    <property type="match status" value="1"/>
</dbReference>
<dbReference type="Pfam" id="PF07679">
    <property type="entry name" value="I-set"/>
    <property type="match status" value="1"/>
</dbReference>
<dbReference type="Pfam" id="PF00560">
    <property type="entry name" value="LRR_1"/>
    <property type="match status" value="1"/>
</dbReference>
<dbReference type="Pfam" id="PF13855">
    <property type="entry name" value="LRR_8"/>
    <property type="match status" value="2"/>
</dbReference>
<dbReference type="SMART" id="SM00409">
    <property type="entry name" value="IG"/>
    <property type="match status" value="1"/>
</dbReference>
<dbReference type="SMART" id="SM00408">
    <property type="entry name" value="IGc2"/>
    <property type="match status" value="1"/>
</dbReference>
<dbReference type="SMART" id="SM00369">
    <property type="entry name" value="LRR_TYP"/>
    <property type="match status" value="6"/>
</dbReference>
<dbReference type="SMART" id="SM00082">
    <property type="entry name" value="LRRCT"/>
    <property type="match status" value="1"/>
</dbReference>
<dbReference type="SUPFAM" id="SSF49265">
    <property type="entry name" value="Fibronectin type III"/>
    <property type="match status" value="1"/>
</dbReference>
<dbReference type="SUPFAM" id="SSF48726">
    <property type="entry name" value="Immunoglobulin"/>
    <property type="match status" value="1"/>
</dbReference>
<dbReference type="SUPFAM" id="SSF52058">
    <property type="entry name" value="L domain-like"/>
    <property type="match status" value="1"/>
</dbReference>
<dbReference type="PROSITE" id="PS50853">
    <property type="entry name" value="FN3"/>
    <property type="match status" value="1"/>
</dbReference>
<dbReference type="PROSITE" id="PS50835">
    <property type="entry name" value="IG_LIKE"/>
    <property type="match status" value="1"/>
</dbReference>
<sequence>MAPPLLLLLLASGAAACPLPCVCQNLSESLSTLCAHRGLLFVPPNVDRRTVELRLADNFIQALGPPDFRNMTGLVDLTLSRNAITRIGARSFGDLESLRSLHLDGNRLVELGSSSLRGPVNLQHLILSGNQLGRIAPGAFDDFLDSLEDLDVSYNNLRQVPWAGIGSMPALHTLNLDHNLIDALPPGVFAQLSQLSRLDLTSNRLATLAPDPLFSRGRDAEASPSPLVLSFSGNPLHCNCELLWLRRLARPDDLETCASPPTLAGRYFWAVPEGEFSCEPPLIARHTQRLWVLEGQRATLRCRALGDPVPTMHWVGPDDRLVGNSSRAWAFPNGTLEIGVTGAGDAGAYTCIATNPAGEATARVELRVLALPHGGNTSAEGGRPGPSDIAASARTAAEGEGTLESEPAVQVTEVTATSGLVSWGLGRPADPVWMFQIQYNSSEDETLIYRIVPASSHHFLLKHLVPGADYDLCLLALSPAAGPSDLTATRLLGCAHFSTLPATPLCHALQAHVLGGTLTVAVGGVLVAALLVFTVALLVRGRGAGNGRLPLKLSHVQSQTNGGTSPMPKSHPPRSPPPRPQRSCSLDLGDTGGCYGYARRLGGAWARRSHSVHGGLLGAGCRGVGGSAERLEESVV</sequence>